<dbReference type="EMBL" id="U33007">
    <property type="protein sequence ID" value="AAB64896.1"/>
    <property type="molecule type" value="Genomic_DNA"/>
</dbReference>
<dbReference type="PIR" id="S69739">
    <property type="entry name" value="S69739"/>
</dbReference>
<dbReference type="DIP" id="DIP-4583N"/>
<dbReference type="IntAct" id="P87269">
    <property type="interactions" value="1"/>
</dbReference>
<dbReference type="STRING" id="4932.YDR433W"/>
<dbReference type="PaxDb" id="4932-YDR433W"/>
<dbReference type="EnsemblFungi" id="YDR433W_mRNA">
    <property type="protein sequence ID" value="YDR433W"/>
    <property type="gene ID" value="YDR433W"/>
</dbReference>
<dbReference type="AGR" id="SGD:S000002841"/>
<dbReference type="SGD" id="S000002841">
    <property type="gene designation" value="YDR433W"/>
</dbReference>
<dbReference type="HOGENOM" id="CLU_1778919_0_0_1"/>
<dbReference type="GO" id="GO:0006974">
    <property type="term" value="P:DNA damage response"/>
    <property type="evidence" value="ECO:0007001"/>
    <property type="project" value="SGD"/>
</dbReference>
<evidence type="ECO:0000305" key="1"/>
<evidence type="ECO:0000305" key="2">
    <source>
    </source>
</evidence>
<organism>
    <name type="scientific">Saccharomyces cerevisiae (strain ATCC 204508 / S288c)</name>
    <name type="common">Baker's yeast</name>
    <dbReference type="NCBI Taxonomy" id="559292"/>
    <lineage>
        <taxon>Eukaryota</taxon>
        <taxon>Fungi</taxon>
        <taxon>Dikarya</taxon>
        <taxon>Ascomycota</taxon>
        <taxon>Saccharomycotina</taxon>
        <taxon>Saccharomycetes</taxon>
        <taxon>Saccharomycetales</taxon>
        <taxon>Saccharomycetaceae</taxon>
        <taxon>Saccharomyces</taxon>
    </lineage>
</organism>
<protein>
    <recommendedName>
        <fullName>Putative uncharacterized protein YDR433W</fullName>
    </recommendedName>
</protein>
<accession>P87269</accession>
<name>YD433_YEAST</name>
<feature type="chain" id="PRO_0000299893" description="Putative uncharacterized protein YDR433W">
    <location>
        <begin position="1"/>
        <end position="146"/>
    </location>
</feature>
<proteinExistence type="uncertain"/>
<sequence>MTILHQSEDQIEVASEVAAASEAASEVASEAVSPEAASVAPEVDLVVQEVVTVAIPEVATVATPEADMVAPEVVTIVLEVVTIVQEVVIPEVAMVVQEMITVLQEVATVVQEVVMMVQEAIMVLQEMHTEPEMLHVKDHQPGKPFI</sequence>
<comment type="miscellaneous">
    <text evidence="1">Partially overlaps NPL3.</text>
</comment>
<comment type="caution">
    <text evidence="2">Product of a dubious gene prediction unlikely to encode a functional protein. Because of that it is not part of the S.cerevisiae S288c complete/reference proteome set.</text>
</comment>
<reference key="1">
    <citation type="journal article" date="1997" name="Nature">
        <title>The nucleotide sequence of Saccharomyces cerevisiae chromosome IV.</title>
        <authorList>
            <person name="Jacq C."/>
            <person name="Alt-Moerbe J."/>
            <person name="Andre B."/>
            <person name="Arnold W."/>
            <person name="Bahr A."/>
            <person name="Ballesta J.P.G."/>
            <person name="Bargues M."/>
            <person name="Baron L."/>
            <person name="Becker A."/>
            <person name="Biteau N."/>
            <person name="Bloecker H."/>
            <person name="Blugeon C."/>
            <person name="Boskovic J."/>
            <person name="Brandt P."/>
            <person name="Brueckner M."/>
            <person name="Buitrago M.J."/>
            <person name="Coster F."/>
            <person name="Delaveau T."/>
            <person name="del Rey F."/>
            <person name="Dujon B."/>
            <person name="Eide L.G."/>
            <person name="Garcia-Cantalejo J.M."/>
            <person name="Goffeau A."/>
            <person name="Gomez-Peris A."/>
            <person name="Granotier C."/>
            <person name="Hanemann V."/>
            <person name="Hankeln T."/>
            <person name="Hoheisel J.D."/>
            <person name="Jaeger W."/>
            <person name="Jimenez A."/>
            <person name="Jonniaux J.-L."/>
            <person name="Kraemer C."/>
            <person name="Kuester H."/>
            <person name="Laamanen P."/>
            <person name="Legros Y."/>
            <person name="Louis E.J."/>
            <person name="Moeller-Rieker S."/>
            <person name="Monnet A."/>
            <person name="Moro M."/>
            <person name="Mueller-Auer S."/>
            <person name="Nussbaumer B."/>
            <person name="Paricio N."/>
            <person name="Paulin L."/>
            <person name="Perea J."/>
            <person name="Perez-Alonso M."/>
            <person name="Perez-Ortin J.E."/>
            <person name="Pohl T.M."/>
            <person name="Prydz H."/>
            <person name="Purnelle B."/>
            <person name="Rasmussen S.W."/>
            <person name="Remacha M.A."/>
            <person name="Revuelta J.L."/>
            <person name="Rieger M."/>
            <person name="Salom D."/>
            <person name="Saluz H.P."/>
            <person name="Saiz J.E."/>
            <person name="Saren A.-M."/>
            <person name="Schaefer M."/>
            <person name="Scharfe M."/>
            <person name="Schmidt E.R."/>
            <person name="Schneider C."/>
            <person name="Scholler P."/>
            <person name="Schwarz S."/>
            <person name="Soler-Mira A."/>
            <person name="Urrestarazu L.A."/>
            <person name="Verhasselt P."/>
            <person name="Vissers S."/>
            <person name="Voet M."/>
            <person name="Volckaert G."/>
            <person name="Wagner G."/>
            <person name="Wambutt R."/>
            <person name="Wedler E."/>
            <person name="Wedler H."/>
            <person name="Woelfl S."/>
            <person name="Harris D.E."/>
            <person name="Bowman S."/>
            <person name="Brown D."/>
            <person name="Churcher C.M."/>
            <person name="Connor R."/>
            <person name="Dedman K."/>
            <person name="Gentles S."/>
            <person name="Hamlin N."/>
            <person name="Hunt S."/>
            <person name="Jones L."/>
            <person name="McDonald S."/>
            <person name="Murphy L.D."/>
            <person name="Niblett D."/>
            <person name="Odell C."/>
            <person name="Oliver K."/>
            <person name="Rajandream M.A."/>
            <person name="Richards C."/>
            <person name="Shore L."/>
            <person name="Walsh S.V."/>
            <person name="Barrell B.G."/>
            <person name="Dietrich F.S."/>
            <person name="Mulligan J.T."/>
            <person name="Allen E."/>
            <person name="Araujo R."/>
            <person name="Aviles E."/>
            <person name="Berno A."/>
            <person name="Carpenter J."/>
            <person name="Chen E."/>
            <person name="Cherry J.M."/>
            <person name="Chung E."/>
            <person name="Duncan M."/>
            <person name="Hunicke-Smith S."/>
            <person name="Hyman R.W."/>
            <person name="Komp C."/>
            <person name="Lashkari D."/>
            <person name="Lew H."/>
            <person name="Lin D."/>
            <person name="Mosedale D."/>
            <person name="Nakahara K."/>
            <person name="Namath A."/>
            <person name="Oefner P."/>
            <person name="Oh C."/>
            <person name="Petel F.X."/>
            <person name="Roberts D."/>
            <person name="Schramm S."/>
            <person name="Schroeder M."/>
            <person name="Shogren T."/>
            <person name="Shroff N."/>
            <person name="Winant A."/>
            <person name="Yelton M.A."/>
            <person name="Botstein D."/>
            <person name="Davis R.W."/>
            <person name="Johnston M."/>
            <person name="Andrews S."/>
            <person name="Brinkman R."/>
            <person name="Cooper J."/>
            <person name="Ding H."/>
            <person name="Du Z."/>
            <person name="Favello A."/>
            <person name="Fulton L."/>
            <person name="Gattung S."/>
            <person name="Greco T."/>
            <person name="Hallsworth K."/>
            <person name="Hawkins J."/>
            <person name="Hillier L.W."/>
            <person name="Jier M."/>
            <person name="Johnson D."/>
            <person name="Johnston L."/>
            <person name="Kirsten J."/>
            <person name="Kucaba T."/>
            <person name="Langston Y."/>
            <person name="Latreille P."/>
            <person name="Le T."/>
            <person name="Mardis E."/>
            <person name="Menezes S."/>
            <person name="Miller N."/>
            <person name="Nhan M."/>
            <person name="Pauley A."/>
            <person name="Peluso D."/>
            <person name="Rifkin L."/>
            <person name="Riles L."/>
            <person name="Taich A."/>
            <person name="Trevaskis E."/>
            <person name="Vignati D."/>
            <person name="Wilcox L."/>
            <person name="Wohldman P."/>
            <person name="Vaudin M."/>
            <person name="Wilson R."/>
            <person name="Waterston R."/>
            <person name="Albermann K."/>
            <person name="Hani J."/>
            <person name="Heumann K."/>
            <person name="Kleine K."/>
            <person name="Mewes H.-W."/>
            <person name="Zollner A."/>
            <person name="Zaccaria P."/>
        </authorList>
    </citation>
    <scope>NUCLEOTIDE SEQUENCE [LARGE SCALE GENOMIC DNA]</scope>
    <source>
        <strain>ATCC 204508 / S288c</strain>
    </source>
</reference>
<reference key="2">
    <citation type="journal article" date="2014" name="G3 (Bethesda)">
        <title>The reference genome sequence of Saccharomyces cerevisiae: Then and now.</title>
        <authorList>
            <person name="Engel S.R."/>
            <person name="Dietrich F.S."/>
            <person name="Fisk D.G."/>
            <person name="Binkley G."/>
            <person name="Balakrishnan R."/>
            <person name="Costanzo M.C."/>
            <person name="Dwight S.S."/>
            <person name="Hitz B.C."/>
            <person name="Karra K."/>
            <person name="Nash R.S."/>
            <person name="Weng S."/>
            <person name="Wong E.D."/>
            <person name="Lloyd P."/>
            <person name="Skrzypek M.S."/>
            <person name="Miyasato S.R."/>
            <person name="Simison M."/>
            <person name="Cherry J.M."/>
        </authorList>
    </citation>
    <scope>GENOME REANNOTATION</scope>
    <source>
        <strain>ATCC 204508 / S288c</strain>
    </source>
</reference>
<gene>
    <name type="ordered locus">YDR433W</name>
</gene>